<gene>
    <name evidence="1" type="primary">rplP</name>
    <name type="ordered locus">Sala_2811</name>
</gene>
<proteinExistence type="inferred from homology"/>
<name>RL16_SPHAL</name>
<keyword id="KW-1185">Reference proteome</keyword>
<keyword id="KW-0687">Ribonucleoprotein</keyword>
<keyword id="KW-0689">Ribosomal protein</keyword>
<keyword id="KW-0694">RNA-binding</keyword>
<keyword id="KW-0699">rRNA-binding</keyword>
<keyword id="KW-0820">tRNA-binding</keyword>
<accession>Q1GPA6</accession>
<dbReference type="EMBL" id="CP000356">
    <property type="protein sequence ID" value="ABF54516.1"/>
    <property type="molecule type" value="Genomic_DNA"/>
</dbReference>
<dbReference type="RefSeq" id="WP_011543081.1">
    <property type="nucleotide sequence ID" value="NC_008048.1"/>
</dbReference>
<dbReference type="SMR" id="Q1GPA6"/>
<dbReference type="STRING" id="317655.Sala_2811"/>
<dbReference type="KEGG" id="sal:Sala_2811"/>
<dbReference type="eggNOG" id="COG0197">
    <property type="taxonomic scope" value="Bacteria"/>
</dbReference>
<dbReference type="HOGENOM" id="CLU_078858_2_1_5"/>
<dbReference type="OrthoDB" id="9802589at2"/>
<dbReference type="Proteomes" id="UP000006578">
    <property type="component" value="Chromosome"/>
</dbReference>
<dbReference type="GO" id="GO:0022625">
    <property type="term" value="C:cytosolic large ribosomal subunit"/>
    <property type="evidence" value="ECO:0007669"/>
    <property type="project" value="TreeGrafter"/>
</dbReference>
<dbReference type="GO" id="GO:0019843">
    <property type="term" value="F:rRNA binding"/>
    <property type="evidence" value="ECO:0007669"/>
    <property type="project" value="UniProtKB-UniRule"/>
</dbReference>
<dbReference type="GO" id="GO:0003735">
    <property type="term" value="F:structural constituent of ribosome"/>
    <property type="evidence" value="ECO:0007669"/>
    <property type="project" value="InterPro"/>
</dbReference>
<dbReference type="GO" id="GO:0000049">
    <property type="term" value="F:tRNA binding"/>
    <property type="evidence" value="ECO:0007669"/>
    <property type="project" value="UniProtKB-KW"/>
</dbReference>
<dbReference type="GO" id="GO:0006412">
    <property type="term" value="P:translation"/>
    <property type="evidence" value="ECO:0007669"/>
    <property type="project" value="UniProtKB-UniRule"/>
</dbReference>
<dbReference type="CDD" id="cd01433">
    <property type="entry name" value="Ribosomal_L16_L10e"/>
    <property type="match status" value="1"/>
</dbReference>
<dbReference type="FunFam" id="3.90.1170.10:FF:000001">
    <property type="entry name" value="50S ribosomal protein L16"/>
    <property type="match status" value="1"/>
</dbReference>
<dbReference type="Gene3D" id="3.90.1170.10">
    <property type="entry name" value="Ribosomal protein L10e/L16"/>
    <property type="match status" value="1"/>
</dbReference>
<dbReference type="HAMAP" id="MF_01342">
    <property type="entry name" value="Ribosomal_uL16"/>
    <property type="match status" value="1"/>
</dbReference>
<dbReference type="InterPro" id="IPR047873">
    <property type="entry name" value="Ribosomal_uL16"/>
</dbReference>
<dbReference type="InterPro" id="IPR000114">
    <property type="entry name" value="Ribosomal_uL16_bact-type"/>
</dbReference>
<dbReference type="InterPro" id="IPR020798">
    <property type="entry name" value="Ribosomal_uL16_CS"/>
</dbReference>
<dbReference type="InterPro" id="IPR016180">
    <property type="entry name" value="Ribosomal_uL16_dom"/>
</dbReference>
<dbReference type="InterPro" id="IPR036920">
    <property type="entry name" value="Ribosomal_uL16_sf"/>
</dbReference>
<dbReference type="NCBIfam" id="TIGR01164">
    <property type="entry name" value="rplP_bact"/>
    <property type="match status" value="1"/>
</dbReference>
<dbReference type="PANTHER" id="PTHR12220">
    <property type="entry name" value="50S/60S RIBOSOMAL PROTEIN L16"/>
    <property type="match status" value="1"/>
</dbReference>
<dbReference type="PANTHER" id="PTHR12220:SF13">
    <property type="entry name" value="LARGE RIBOSOMAL SUBUNIT PROTEIN UL16M"/>
    <property type="match status" value="1"/>
</dbReference>
<dbReference type="Pfam" id="PF00252">
    <property type="entry name" value="Ribosomal_L16"/>
    <property type="match status" value="1"/>
</dbReference>
<dbReference type="PRINTS" id="PR00060">
    <property type="entry name" value="RIBOSOMALL16"/>
</dbReference>
<dbReference type="SUPFAM" id="SSF54686">
    <property type="entry name" value="Ribosomal protein L16p/L10e"/>
    <property type="match status" value="1"/>
</dbReference>
<dbReference type="PROSITE" id="PS00586">
    <property type="entry name" value="RIBOSOMAL_L16_1"/>
    <property type="match status" value="1"/>
</dbReference>
<dbReference type="PROSITE" id="PS00701">
    <property type="entry name" value="RIBOSOMAL_L16_2"/>
    <property type="match status" value="1"/>
</dbReference>
<protein>
    <recommendedName>
        <fullName evidence="1">Large ribosomal subunit protein uL16</fullName>
    </recommendedName>
    <alternativeName>
        <fullName evidence="2">50S ribosomal protein L16</fullName>
    </alternativeName>
</protein>
<organism>
    <name type="scientific">Sphingopyxis alaskensis (strain DSM 13593 / LMG 18877 / RB2256)</name>
    <name type="common">Sphingomonas alaskensis</name>
    <dbReference type="NCBI Taxonomy" id="317655"/>
    <lineage>
        <taxon>Bacteria</taxon>
        <taxon>Pseudomonadati</taxon>
        <taxon>Pseudomonadota</taxon>
        <taxon>Alphaproteobacteria</taxon>
        <taxon>Sphingomonadales</taxon>
        <taxon>Sphingomonadaceae</taxon>
        <taxon>Sphingopyxis</taxon>
    </lineage>
</organism>
<evidence type="ECO:0000255" key="1">
    <source>
        <dbReference type="HAMAP-Rule" id="MF_01342"/>
    </source>
</evidence>
<evidence type="ECO:0000305" key="2"/>
<feature type="chain" id="PRO_0000251673" description="Large ribosomal subunit protein uL16">
    <location>
        <begin position="1"/>
        <end position="143"/>
    </location>
</feature>
<reference key="1">
    <citation type="journal article" date="2009" name="Proc. Natl. Acad. Sci. U.S.A.">
        <title>The genomic basis of trophic strategy in marine bacteria.</title>
        <authorList>
            <person name="Lauro F.M."/>
            <person name="McDougald D."/>
            <person name="Thomas T."/>
            <person name="Williams T.J."/>
            <person name="Egan S."/>
            <person name="Rice S."/>
            <person name="DeMaere M.Z."/>
            <person name="Ting L."/>
            <person name="Ertan H."/>
            <person name="Johnson J."/>
            <person name="Ferriera S."/>
            <person name="Lapidus A."/>
            <person name="Anderson I."/>
            <person name="Kyrpides N."/>
            <person name="Munk A.C."/>
            <person name="Detter C."/>
            <person name="Han C.S."/>
            <person name="Brown M.V."/>
            <person name="Robb F.T."/>
            <person name="Kjelleberg S."/>
            <person name="Cavicchioli R."/>
        </authorList>
    </citation>
    <scope>NUCLEOTIDE SEQUENCE [LARGE SCALE GENOMIC DNA]</scope>
    <source>
        <strain>DSM 13593 / LMG 18877 / RB2256</strain>
    </source>
</reference>
<comment type="function">
    <text evidence="1">Binds 23S rRNA and is also seen to make contacts with the A and possibly P site tRNAs.</text>
</comment>
<comment type="subunit">
    <text evidence="1">Part of the 50S ribosomal subunit.</text>
</comment>
<comment type="similarity">
    <text evidence="1">Belongs to the universal ribosomal protein uL16 family.</text>
</comment>
<sequence>MLQPKKTKFRKAFKGRIHGNAKGGTSLNFGSYGLKAMEPERITARQIEAARRAISRAIKRQGRLWIRIFPDVPVSSKPAEVRMGKGKGSPEYWAARVKPGRILFELDGVPGPVAALAFERAAMKLPIKTKVIARLGDTSHLEG</sequence>